<organism>
    <name type="scientific">Mus musculus</name>
    <name type="common">Mouse</name>
    <dbReference type="NCBI Taxonomy" id="10090"/>
    <lineage>
        <taxon>Eukaryota</taxon>
        <taxon>Metazoa</taxon>
        <taxon>Chordata</taxon>
        <taxon>Craniata</taxon>
        <taxon>Vertebrata</taxon>
        <taxon>Euteleostomi</taxon>
        <taxon>Mammalia</taxon>
        <taxon>Eutheria</taxon>
        <taxon>Euarchontoglires</taxon>
        <taxon>Glires</taxon>
        <taxon>Rodentia</taxon>
        <taxon>Myomorpha</taxon>
        <taxon>Muroidea</taxon>
        <taxon>Muridae</taxon>
        <taxon>Murinae</taxon>
        <taxon>Mus</taxon>
        <taxon>Mus</taxon>
    </lineage>
</organism>
<keyword id="KW-1003">Cell membrane</keyword>
<keyword id="KW-0966">Cell projection</keyword>
<keyword id="KW-0221">Differentiation</keyword>
<keyword id="KW-1015">Disulfide bond</keyword>
<keyword id="KW-0967">Endosome</keyword>
<keyword id="KW-0297">G-protein coupled receptor</keyword>
<keyword id="KW-0325">Glycoprotein</keyword>
<keyword id="KW-0395">Inflammatory response</keyword>
<keyword id="KW-0446">Lipid-binding</keyword>
<keyword id="KW-0458">Lysosome</keyword>
<keyword id="KW-0472">Membrane</keyword>
<keyword id="KW-0597">Phosphoprotein</keyword>
<keyword id="KW-0675">Receptor</keyword>
<keyword id="KW-1185">Reference proteome</keyword>
<keyword id="KW-0807">Transducer</keyword>
<keyword id="KW-0812">Transmembrane</keyword>
<keyword id="KW-1133">Transmembrane helix</keyword>
<gene>
    <name type="primary">Ffar4</name>
    <name type="synonym">Gpr120</name>
    <name type="synonym">O3far1</name>
</gene>
<protein>
    <recommendedName>
        <fullName>Free fatty acid receptor 4</fullName>
    </recommendedName>
    <alternativeName>
        <fullName>G-protein coupled receptor 120</fullName>
    </alternativeName>
    <alternativeName>
        <fullName>G-protein coupled receptor GT01</fullName>
    </alternativeName>
    <alternativeName>
        <fullName>Omega-3 fatty acid receptor 1</fullName>
    </alternativeName>
</protein>
<reference key="1">
    <citation type="journal article" date="2003" name="FEBS Lett.">
        <title>Seven evolutionarily conserved human rhodopsin G protein-coupled receptors lacking close relatives.</title>
        <authorList>
            <person name="Fredriksson R."/>
            <person name="Hoeglund P.J."/>
            <person name="Gloriam D.E.I."/>
            <person name="Lagerstroem M.C."/>
            <person name="Schioeth H.B."/>
        </authorList>
    </citation>
    <scope>NUCLEOTIDE SEQUENCE [MRNA]</scope>
</reference>
<reference key="2">
    <citation type="journal article" date="2005" name="Nat. Med.">
        <title>Free fatty acids regulate gut incretin glucagon-like peptide-1 secretion through GPR120.</title>
        <authorList>
            <person name="Hirasawa A."/>
            <person name="Tsumaya K."/>
            <person name="Awaji T."/>
            <person name="Katsuma S."/>
            <person name="Adachi T."/>
            <person name="Yamada M."/>
            <person name="Sugimoto Y."/>
            <person name="Miyazaki S."/>
            <person name="Tsujimoto G."/>
        </authorList>
    </citation>
    <scope>NUCLEOTIDE SEQUENCE [MRNA]</scope>
    <scope>TISSUE SPECIFICITY</scope>
    <scope>FUNCTION</scope>
</reference>
<reference key="3">
    <citation type="journal article" date="2004" name="Genome Res.">
        <title>The status, quality, and expansion of the NIH full-length cDNA project: the Mammalian Gene Collection (MGC).</title>
        <authorList>
            <consortium name="The MGC Project Team"/>
        </authorList>
    </citation>
    <scope>NUCLEOTIDE SEQUENCE [LARGE SCALE MRNA]</scope>
    <source>
        <strain>FVB/N</strain>
        <tissue>Colon</tissue>
    </source>
</reference>
<reference key="4">
    <citation type="journal article" date="2005" name="J. Biol. Chem.">
        <title>Free fatty acids inhibit serum deprivation-induced apoptosis through GPR120 in a murine enteroendocrine cell line STC-1.</title>
        <authorList>
            <person name="Katsuma S."/>
            <person name="Hatae N."/>
            <person name="Yano T."/>
            <person name="Ruike Y."/>
            <person name="Kimura M."/>
            <person name="Hirasawa A."/>
            <person name="Tsujimoto G."/>
        </authorList>
    </citation>
    <scope>FUNCTION</scope>
</reference>
<reference key="5">
    <citation type="journal article" date="2007" name="Biochem. Biophys. Res. Commun.">
        <title>The regulation of adipogenesis through GPR120.</title>
        <authorList>
            <person name="Gotoh C."/>
            <person name="Hong Y.H."/>
            <person name="Iga T."/>
            <person name="Hishikawa D."/>
            <person name="Suzuki Y."/>
            <person name="Song S.H."/>
            <person name="Choi K.C."/>
            <person name="Adachi T."/>
            <person name="Hirasawa A."/>
            <person name="Tsujimoto G."/>
            <person name="Sasaki S."/>
            <person name="Roh S.G."/>
        </authorList>
    </citation>
    <scope>FUNCTION</scope>
    <scope>TISSUE SPECIFICITY</scope>
    <scope>DEVELOPMENTAL STAGE</scope>
    <scope>INDUCTION</scope>
</reference>
<reference key="6">
    <citation type="journal article" date="2009" name="Neurosci. Lett.">
        <title>Colocalization of GPR120 with phospholipase-Cbeta2 and alpha-gustducin in the taste bud cells in mice.</title>
        <authorList>
            <person name="Matsumura S."/>
            <person name="Eguchi A."/>
            <person name="Mizushige T."/>
            <person name="Kitabayashi N."/>
            <person name="Tsuzuki S."/>
            <person name="Inoue K."/>
            <person name="Fushiki T."/>
        </authorList>
    </citation>
    <scope>TISSUE SPECIFICITY</scope>
</reference>
<reference key="7">
    <citation type="journal article" date="2010" name="Cell">
        <title>GPR120 is an omega-3 fatty acid receptor mediating potent anti-inflammatory and insulin-sensitizing effects.</title>
        <authorList>
            <person name="Oh da Y."/>
            <person name="Talukdar S."/>
            <person name="Bae E.J."/>
            <person name="Imamura T."/>
            <person name="Morinaga H."/>
            <person name="Fan W."/>
            <person name="Li P."/>
            <person name="Lu W.J."/>
            <person name="Watkins S.M."/>
            <person name="Olefsky J.M."/>
        </authorList>
    </citation>
    <scope>FUNCTION</scope>
    <scope>TISSUE SPECIFICITY</scope>
    <scope>SUBCELLULAR LOCATION</scope>
    <scope>DISRUPTION PHENOTYPE</scope>
    <scope>INDUCTION</scope>
</reference>
<reference key="8">
    <citation type="journal article" date="2010" name="J. Neurosci.">
        <title>Taste preference for fatty acids is mediated by GPR40 and GPR120.</title>
        <authorList>
            <person name="Cartoni C."/>
            <person name="Yasumatsu K."/>
            <person name="Ohkuri T."/>
            <person name="Shigemura N."/>
            <person name="Yoshida R."/>
            <person name="Godinot N."/>
            <person name="le Coutre J."/>
            <person name="Ninomiya Y."/>
            <person name="Damak S."/>
        </authorList>
    </citation>
    <scope>TISSUE SPECIFICITY</scope>
    <scope>FUNCTION</scope>
    <scope>DISRUPTION PHENOTYPE</scope>
</reference>
<reference key="9">
    <citation type="journal article" date="2012" name="Nature">
        <title>Dysfunction of lipid sensor GPR120 leads to obesity in both mouse and human.</title>
        <authorList>
            <person name="Ichimura A."/>
            <person name="Hirasawa A."/>
            <person name="Poulain-Godefroy O."/>
            <person name="Bonnefond A."/>
            <person name="Hara T."/>
            <person name="Yengo L."/>
            <person name="Kimura I."/>
            <person name="Leloire A."/>
            <person name="Liu N."/>
            <person name="Iida K."/>
            <person name="Choquet H."/>
            <person name="Besnard P."/>
            <person name="Lecoeur C."/>
            <person name="Vivequin S."/>
            <person name="Ayukawa K."/>
            <person name="Takeuchi M."/>
            <person name="Ozawa K."/>
            <person name="Tauber M."/>
            <person name="Maffeis C."/>
            <person name="Morandi A."/>
            <person name="Buzzetti R."/>
            <person name="Elliott P."/>
            <person name="Pouta A."/>
            <person name="Jarvelin M.R."/>
            <person name="Korner A."/>
            <person name="Kiess W."/>
            <person name="Pigeyre M."/>
            <person name="Caiazzo R."/>
            <person name="Van Hul W."/>
            <person name="Van Gaal L."/>
            <person name="Horber F."/>
            <person name="Balkau B."/>
            <person name="Levy-Marchal C."/>
            <person name="Rouskas K."/>
            <person name="Kouvatsi A."/>
            <person name="Hebebrand J."/>
            <person name="Hinney A."/>
            <person name="Scherag A."/>
            <person name="Pattou F."/>
            <person name="Meyre D."/>
            <person name="Koshimizu T.A."/>
            <person name="Wolowczuk I."/>
            <person name="Tsujimoto G."/>
            <person name="Froguel P."/>
        </authorList>
    </citation>
    <scope>DISRUPTION PHENOTYPE</scope>
    <scope>FUNCTION</scope>
</reference>
<reference key="10">
    <citation type="journal article" date="2014" name="Am. J. Physiol.">
        <title>G protein-coupled receptor 120 signaling regulates ghrelin secretion in vivo and in vitro.</title>
        <authorList>
            <person name="Gong Z."/>
            <person name="Yoshimura M."/>
            <person name="Aizawa S."/>
            <person name="Kurotani R."/>
            <person name="Zigman J.M."/>
            <person name="Sakai T."/>
            <person name="Sakata I."/>
        </authorList>
    </citation>
    <scope>FUNCTION</scope>
    <scope>TISSUE SPECIFICITY</scope>
</reference>
<reference key="11">
    <citation type="journal article" date="2014" name="Diabetologia">
        <title>GPR120 (FFAR4) is preferentially expressed in pancreatic delta cells and regulates somatostatin secretion from murine islets of Langerhans.</title>
        <authorList>
            <person name="Stone V.M."/>
            <person name="Dhayal S."/>
            <person name="Brocklehurst K.J."/>
            <person name="Lenaghan C."/>
            <person name="Soerhede Winzell M."/>
            <person name="Hammar M."/>
            <person name="Xu X."/>
            <person name="Smith D.M."/>
            <person name="Morgan N.G."/>
        </authorList>
    </citation>
    <scope>FUNCTION</scope>
    <scope>TISSUE SPECIFICITY</scope>
</reference>
<reference key="12">
    <citation type="journal article" date="2014" name="J. Biol. Chem.">
        <title>Alteration of the glucagon axis in GPR120 (FFAR4) knockout mice: a role for GPR120 in glucagon secretion.</title>
        <authorList>
            <person name="Suckow A.T."/>
            <person name="Polidori D."/>
            <person name="Yan W."/>
            <person name="Chon S."/>
            <person name="Ma J.Y."/>
            <person name="Leonard J."/>
            <person name="Briscoe C.P."/>
        </authorList>
    </citation>
    <scope>FUNCTION</scope>
    <scope>DISRUPTION PHENOTYPE</scope>
    <scope>TISSUE SPECIFICITY</scope>
</reference>
<reference key="13">
    <citation type="journal article" date="2015" name="Endocrinology">
        <title>Free fatty acid receptor GPR120 is highly expressed in enteroendocrine K cells of the upper small intestine and has a critical role in GIP secretion after fat ingestion.</title>
        <authorList>
            <person name="Iwasaki K."/>
            <person name="Harada N."/>
            <person name="Sasaki K."/>
            <person name="Yamane S."/>
            <person name="Iida K."/>
            <person name="Suzuki K."/>
            <person name="Hamasaki A."/>
            <person name="Nasteska D."/>
            <person name="Shibue K."/>
            <person name="Joo E."/>
            <person name="Harada T."/>
            <person name="Hashimoto T."/>
            <person name="Asakawa Y."/>
            <person name="Hirasawa A."/>
            <person name="Inagaki N."/>
        </authorList>
    </citation>
    <scope>FUNCTION</scope>
    <scope>TISSUE SPECIFICITY</scope>
</reference>
<reference key="14">
    <citation type="journal article" date="2015" name="Sci. Rep.">
        <title>GPR120: A bi-potential mediator to modulate the osteogenic and adipogenic differentiation of BMMSCs.</title>
        <authorList>
            <person name="Gao B."/>
            <person name="Huang Q."/>
            <person name="Jie Q."/>
            <person name="Lu W.G."/>
            <person name="Wang L."/>
            <person name="Li X.J."/>
            <person name="Sun Z."/>
            <person name="Hu Y.Q."/>
            <person name="Chen L."/>
            <person name="Liu B.H."/>
            <person name="Liu J."/>
            <person name="Yang L."/>
            <person name="Luo Z.J."/>
        </authorList>
    </citation>
    <scope>FUNCTION</scope>
    <scope>DEVELOPMENTAL STAGE</scope>
</reference>
<reference key="15">
    <citation type="journal article" date="2016" name="J. Biol. Chem.">
        <title>Targeted Elimination of G Proteins and Arrestins Defines Their Specific Contributions to Both Intensity and Duration of G Protein-coupled Receptor Signaling.</title>
        <authorList>
            <person name="Alvarez-Curto E."/>
            <person name="Inoue A."/>
            <person name="Jenkins L."/>
            <person name="Raihan S.Z."/>
            <person name="Prihandoko R."/>
            <person name="Tobin A.B."/>
            <person name="Milligan G."/>
        </authorList>
    </citation>
    <scope>FUNCTION</scope>
    <scope>SUBCELLULAR LOCATION</scope>
    <scope>MUTAGENESIS OF 347-THR--SER-361</scope>
</reference>
<reference key="16">
    <citation type="journal article" date="2016" name="Mol. Pharmacol.">
        <title>Distinct Phosphorylation Clusters Determine the Signaling Outcome of Free Fatty Acid Receptor 4/G Protein-Coupled Receptor 120.</title>
        <authorList>
            <person name="Prihandoko R."/>
            <person name="Alvarez-Curto E."/>
            <person name="Hudson B.D."/>
            <person name="Butcher A.J."/>
            <person name="Ulven T."/>
            <person name="Miller A.M."/>
            <person name="Tobin A.B."/>
            <person name="Milligan G."/>
        </authorList>
    </citation>
    <scope>FUNCTION</scope>
    <scope>PHOSPHORYLATION AT THR-347; THR-349; SER-350; SER-357; SER-360 AND SER-361</scope>
    <scope>MUTAGENESIS OF 347-THR--SER-361</scope>
    <scope>INTERACTION WITH ARRB2</scope>
    <scope>SUBCELLULAR LOCATION</scope>
</reference>
<reference key="17">
    <citation type="journal article" date="2016" name="Nat. Commun.">
        <title>The lipid sensor GPR120 promotes brown fat activation and FGF21 release from adipocytes.</title>
        <authorList>
            <person name="Quesada-Lopez T."/>
            <person name="Cereijo R."/>
            <person name="Turatsinze J.V."/>
            <person name="Planavila A."/>
            <person name="Cairo M."/>
            <person name="Gavalda-Navarro A."/>
            <person name="Peyrou M."/>
            <person name="Moure R."/>
            <person name="Iglesias R."/>
            <person name="Giralt M."/>
            <person name="Eizirik D.L."/>
            <person name="Villarroya F."/>
        </authorList>
    </citation>
    <scope>FUNCTION</scope>
    <scope>TISSUE SPECIFICITY</scope>
    <scope>INDUCTION BY COLD</scope>
</reference>
<reference key="18">
    <citation type="journal article" date="2018" name="EMBO Mol. Med.">
        <title>The GPR120 agonist TUG-891 promotes metabolic health by stimulating mitochondrial respiration in brown fat.</title>
        <authorList>
            <person name="Schilperoort M."/>
            <person name="van Dam A.D."/>
            <person name="Hoeke G."/>
            <person name="Shabalina I.G."/>
            <person name="Okolo A."/>
            <person name="Hanyaloglu A.C."/>
            <person name="Dib L.H."/>
            <person name="Mol I.M."/>
            <person name="Caengprasath N."/>
            <person name="Chan Y.W."/>
            <person name="Damak S."/>
            <person name="Miller A.R."/>
            <person name="Coskun T."/>
            <person name="Shimpukade B."/>
            <person name="Ulven T."/>
            <person name="Kooijman S."/>
            <person name="Rensen P.C."/>
            <person name="Christian M."/>
        </authorList>
    </citation>
    <scope>FUNCTION</scope>
    <scope>INDUCTION BY ADRB3 AGONIST</scope>
    <scope>DEVELOPMENTAL STAGE</scope>
</reference>
<reference key="19">
    <citation type="journal article" date="2019" name="Cell">
        <title>Omega-3 Fatty Acids Activate Ciliary FFAR4 to Control Adipogenesis.</title>
        <authorList>
            <person name="Hilgendorf K.I."/>
            <person name="Johnson C.T."/>
            <person name="Mezger A."/>
            <person name="Rice S.L."/>
            <person name="Norris A.M."/>
            <person name="Demeter J."/>
            <person name="Greenleaf W.J."/>
            <person name="Reiter J.F."/>
            <person name="Kopinke D."/>
            <person name="Jackson P.K."/>
        </authorList>
    </citation>
    <scope>FUNCTION</scope>
    <scope>SUBCELLULAR LOCATION</scope>
    <scope>TISSUE SPECIFICITY</scope>
    <scope>DEVELOPMENTAL STAGE</scope>
</reference>
<evidence type="ECO:0000250" key="1">
    <source>
        <dbReference type="UniProtKB" id="Q5NUL3"/>
    </source>
</evidence>
<evidence type="ECO:0000255" key="2"/>
<evidence type="ECO:0000255" key="3">
    <source>
        <dbReference type="PROSITE-ProRule" id="PRU00521"/>
    </source>
</evidence>
<evidence type="ECO:0000269" key="4">
    <source>
    </source>
</evidence>
<evidence type="ECO:0000269" key="5">
    <source>
    </source>
</evidence>
<evidence type="ECO:0000269" key="6">
    <source>
    </source>
</evidence>
<evidence type="ECO:0000269" key="7">
    <source>
    </source>
</evidence>
<evidence type="ECO:0000269" key="8">
    <source>
    </source>
</evidence>
<evidence type="ECO:0000269" key="9">
    <source>
    </source>
</evidence>
<evidence type="ECO:0000269" key="10">
    <source>
    </source>
</evidence>
<evidence type="ECO:0000269" key="11">
    <source>
    </source>
</evidence>
<evidence type="ECO:0000269" key="12">
    <source>
    </source>
</evidence>
<evidence type="ECO:0000269" key="13">
    <source>
    </source>
</evidence>
<evidence type="ECO:0000269" key="14">
    <source>
    </source>
</evidence>
<evidence type="ECO:0000269" key="15">
    <source>
    </source>
</evidence>
<evidence type="ECO:0000269" key="16">
    <source>
    </source>
</evidence>
<evidence type="ECO:0000269" key="17">
    <source>
    </source>
</evidence>
<evidence type="ECO:0000269" key="18">
    <source>
    </source>
</evidence>
<evidence type="ECO:0000269" key="19">
    <source>
    </source>
</evidence>
<evidence type="ECO:0000269" key="20">
    <source>
    </source>
</evidence>
<evidence type="ECO:0000305" key="21">
    <source>
    </source>
</evidence>
<sequence length="361" mass="40813">MSPECAQTTGPGPSHTLDQVNRTHFPFFSDVKGDHRLVLSVVETTVLGLIFVVSLLGNVCALVLVARRRRRGATASLVLNLFCADLLFTSAIPLVLVVRWTEAWLLGPVVCHLLFYVMTMSGSVTILTLAAVSLERMVCIVRLRRGLSGPGRRTQAALLAFIWGYSALAALPLCILFRVVPQRLPGGDQEIPICTLDWPNRIGEISWDVFFVTLNFLVPGLVIVISYSKILQITKASRKRLTLSLAYSESHQIRVSQQDYRLFRTLFLLMVSFFIMWSPIIITILLILIQNFRQDLVIWPSLFFWVVAFTFANSALNPILYNMSLFRNEWRKIFCCFFFPEKGAIFTDTSVRRNDLSVISS</sequence>
<dbReference type="EMBL" id="AB115769">
    <property type="protein sequence ID" value="BAD83369.1"/>
    <property type="molecule type" value="mRNA"/>
</dbReference>
<dbReference type="EMBL" id="AY288424">
    <property type="protein sequence ID" value="AAP72133.1"/>
    <property type="molecule type" value="mRNA"/>
</dbReference>
<dbReference type="EMBL" id="BC053698">
    <property type="protein sequence ID" value="AAH53698.1"/>
    <property type="molecule type" value="mRNA"/>
</dbReference>
<dbReference type="CCDS" id="CCDS29783.1"/>
<dbReference type="RefSeq" id="NP_861413.1">
    <property type="nucleotide sequence ID" value="NM_181748.2"/>
</dbReference>
<dbReference type="SMR" id="Q7TMA4"/>
<dbReference type="FunCoup" id="Q7TMA4">
    <property type="interactions" value="191"/>
</dbReference>
<dbReference type="IntAct" id="Q7TMA4">
    <property type="interactions" value="1"/>
</dbReference>
<dbReference type="STRING" id="10090.ENSMUSP00000063660"/>
<dbReference type="BindingDB" id="Q7TMA4"/>
<dbReference type="ChEMBL" id="CHEMBL2052036"/>
<dbReference type="GuidetoPHARMACOLOGY" id="127"/>
<dbReference type="SwissLipids" id="SLP:000001560"/>
<dbReference type="GlyCosmos" id="Q7TMA4">
    <property type="glycosylation" value="1 site, No reported glycans"/>
</dbReference>
<dbReference type="GlyGen" id="Q7TMA4">
    <property type="glycosylation" value="1 site"/>
</dbReference>
<dbReference type="iPTMnet" id="Q7TMA4"/>
<dbReference type="PhosphoSitePlus" id="Q7TMA4"/>
<dbReference type="PaxDb" id="10090-ENSMUSP00000063660"/>
<dbReference type="ProteomicsDB" id="271692"/>
<dbReference type="Antibodypedia" id="16549">
    <property type="antibodies" value="372 antibodies from 35 providers"/>
</dbReference>
<dbReference type="DNASU" id="107221"/>
<dbReference type="Ensembl" id="ENSMUST00000067098.8">
    <property type="protein sequence ID" value="ENSMUSP00000063660.7"/>
    <property type="gene ID" value="ENSMUSG00000054200.8"/>
</dbReference>
<dbReference type="GeneID" id="107221"/>
<dbReference type="KEGG" id="mmu:107221"/>
<dbReference type="UCSC" id="uc008hjc.1">
    <property type="organism name" value="mouse"/>
</dbReference>
<dbReference type="AGR" id="MGI:2147577"/>
<dbReference type="CTD" id="338557"/>
<dbReference type="MGI" id="MGI:2147577">
    <property type="gene designation" value="Ffar4"/>
</dbReference>
<dbReference type="VEuPathDB" id="HostDB:ENSMUSG00000054200"/>
<dbReference type="eggNOG" id="KOG3656">
    <property type="taxonomic scope" value="Eukaryota"/>
</dbReference>
<dbReference type="GeneTree" id="ENSGT01130000278263"/>
<dbReference type="HOGENOM" id="CLU_061487_0_0_1"/>
<dbReference type="InParanoid" id="Q7TMA4"/>
<dbReference type="OMA" id="WDVTFAT"/>
<dbReference type="OrthoDB" id="9880339at2759"/>
<dbReference type="PhylomeDB" id="Q7TMA4"/>
<dbReference type="TreeFam" id="TF336844"/>
<dbReference type="Reactome" id="R-MMU-381771">
    <property type="pathway name" value="Synthesis, secretion, and inactivation of Glucagon-like Peptide-1 (GLP-1)"/>
</dbReference>
<dbReference type="Reactome" id="R-MMU-416476">
    <property type="pathway name" value="G alpha (q) signalling events"/>
</dbReference>
<dbReference type="BioGRID-ORCS" id="107221">
    <property type="hits" value="1 hit in 79 CRISPR screens"/>
</dbReference>
<dbReference type="ChiTaRS" id="Ffar4">
    <property type="organism name" value="mouse"/>
</dbReference>
<dbReference type="PRO" id="PR:Q7TMA4"/>
<dbReference type="Proteomes" id="UP000000589">
    <property type="component" value="Chromosome 19"/>
</dbReference>
<dbReference type="RNAct" id="Q7TMA4">
    <property type="molecule type" value="protein"/>
</dbReference>
<dbReference type="Bgee" id="ENSMUSG00000054200">
    <property type="expression patterns" value="Expressed in brown adipose tissue and 49 other cell types or tissues"/>
</dbReference>
<dbReference type="ExpressionAtlas" id="Q7TMA4">
    <property type="expression patterns" value="baseline and differential"/>
</dbReference>
<dbReference type="GO" id="GO:0036064">
    <property type="term" value="C:ciliary basal body"/>
    <property type="evidence" value="ECO:0007669"/>
    <property type="project" value="Ensembl"/>
</dbReference>
<dbReference type="GO" id="GO:0060170">
    <property type="term" value="C:ciliary membrane"/>
    <property type="evidence" value="ECO:0007669"/>
    <property type="project" value="UniProtKB-SubCell"/>
</dbReference>
<dbReference type="GO" id="GO:0005929">
    <property type="term" value="C:cilium"/>
    <property type="evidence" value="ECO:0000314"/>
    <property type="project" value="UniProtKB"/>
</dbReference>
<dbReference type="GO" id="GO:0030139">
    <property type="term" value="C:endocytic vesicle"/>
    <property type="evidence" value="ECO:0000314"/>
    <property type="project" value="MGI"/>
</dbReference>
<dbReference type="GO" id="GO:0010008">
    <property type="term" value="C:endosome membrane"/>
    <property type="evidence" value="ECO:0007669"/>
    <property type="project" value="UniProtKB-SubCell"/>
</dbReference>
<dbReference type="GO" id="GO:0005765">
    <property type="term" value="C:lysosomal membrane"/>
    <property type="evidence" value="ECO:0007669"/>
    <property type="project" value="UniProtKB-SubCell"/>
</dbReference>
<dbReference type="GO" id="GO:0005886">
    <property type="term" value="C:plasma membrane"/>
    <property type="evidence" value="ECO:0000314"/>
    <property type="project" value="UniProtKB"/>
</dbReference>
<dbReference type="GO" id="GO:0005504">
    <property type="term" value="F:fatty acid binding"/>
    <property type="evidence" value="ECO:0000314"/>
    <property type="project" value="UniProtKB"/>
</dbReference>
<dbReference type="GO" id="GO:0004930">
    <property type="term" value="F:G protein-coupled receptor activity"/>
    <property type="evidence" value="ECO:0000314"/>
    <property type="project" value="MGI"/>
</dbReference>
<dbReference type="GO" id="GO:0008527">
    <property type="term" value="F:taste receptor activity"/>
    <property type="evidence" value="ECO:0000315"/>
    <property type="project" value="UniProtKB"/>
</dbReference>
<dbReference type="GO" id="GO:0007189">
    <property type="term" value="P:adenylate cyclase-activating G protein-coupled receptor signaling pathway"/>
    <property type="evidence" value="ECO:0000314"/>
    <property type="project" value="UniProtKB"/>
</dbReference>
<dbReference type="GO" id="GO:0050873">
    <property type="term" value="P:brown fat cell differentiation"/>
    <property type="evidence" value="ECO:0000315"/>
    <property type="project" value="UniProtKB"/>
</dbReference>
<dbReference type="GO" id="GO:0045444">
    <property type="term" value="P:fat cell differentiation"/>
    <property type="evidence" value="ECO:0000315"/>
    <property type="project" value="CACAO"/>
</dbReference>
<dbReference type="GO" id="GO:0007186">
    <property type="term" value="P:G protein-coupled receptor signaling pathway"/>
    <property type="evidence" value="ECO:0000314"/>
    <property type="project" value="MGI"/>
</dbReference>
<dbReference type="GO" id="GO:0036321">
    <property type="term" value="P:ghrelin secretion"/>
    <property type="evidence" value="ECO:0000315"/>
    <property type="project" value="UniProtKB"/>
</dbReference>
<dbReference type="GO" id="GO:0046879">
    <property type="term" value="P:hormone secretion"/>
    <property type="evidence" value="ECO:0000314"/>
    <property type="project" value="MGI"/>
</dbReference>
<dbReference type="GO" id="GO:0006954">
    <property type="term" value="P:inflammatory response"/>
    <property type="evidence" value="ECO:0007669"/>
    <property type="project" value="UniProtKB-KW"/>
</dbReference>
<dbReference type="GO" id="GO:0043066">
    <property type="term" value="P:negative regulation of apoptotic process"/>
    <property type="evidence" value="ECO:0000315"/>
    <property type="project" value="UniProtKB"/>
</dbReference>
<dbReference type="GO" id="GO:0001818">
    <property type="term" value="P:negative regulation of cytokine production"/>
    <property type="evidence" value="ECO:0000314"/>
    <property type="project" value="UniProtKB"/>
</dbReference>
<dbReference type="GO" id="GO:0050728">
    <property type="term" value="P:negative regulation of inflammatory response"/>
    <property type="evidence" value="ECO:0000314"/>
    <property type="project" value="UniProtKB"/>
</dbReference>
<dbReference type="GO" id="GO:0032691">
    <property type="term" value="P:negative regulation of interleukin-1 beta production"/>
    <property type="evidence" value="ECO:0007669"/>
    <property type="project" value="Ensembl"/>
</dbReference>
<dbReference type="GO" id="GO:0090275">
    <property type="term" value="P:negative regulation of somatostatin secretion"/>
    <property type="evidence" value="ECO:0000315"/>
    <property type="project" value="UniProtKB"/>
</dbReference>
<dbReference type="GO" id="GO:0007200">
    <property type="term" value="P:phospholipase C-activating G protein-coupled receptor signaling pathway"/>
    <property type="evidence" value="ECO:0000315"/>
    <property type="project" value="UniProtKB"/>
</dbReference>
<dbReference type="GO" id="GO:0090336">
    <property type="term" value="P:positive regulation of brown fat cell differentiation"/>
    <property type="evidence" value="ECO:0000315"/>
    <property type="project" value="UniProtKB"/>
</dbReference>
<dbReference type="GO" id="GO:0120162">
    <property type="term" value="P:positive regulation of cold-induced thermogenesis"/>
    <property type="evidence" value="ECO:0000315"/>
    <property type="project" value="YuBioLab"/>
</dbReference>
<dbReference type="GO" id="GO:0007204">
    <property type="term" value="P:positive regulation of cytosolic calcium ion concentration"/>
    <property type="evidence" value="ECO:0000315"/>
    <property type="project" value="UniProtKB"/>
</dbReference>
<dbReference type="GO" id="GO:0070374">
    <property type="term" value="P:positive regulation of ERK1 and ERK2 cascade"/>
    <property type="evidence" value="ECO:0000315"/>
    <property type="project" value="UniProtKB"/>
</dbReference>
<dbReference type="GO" id="GO:0070094">
    <property type="term" value="P:positive regulation of glucagon secretion"/>
    <property type="evidence" value="ECO:0000315"/>
    <property type="project" value="UniProtKB"/>
</dbReference>
<dbReference type="GO" id="GO:0045669">
    <property type="term" value="P:positive regulation of osteoblast differentiation"/>
    <property type="evidence" value="ECO:0000315"/>
    <property type="project" value="UniProtKB"/>
</dbReference>
<dbReference type="GO" id="GO:0010827">
    <property type="term" value="P:regulation of D-glucose transmembrane transport"/>
    <property type="evidence" value="ECO:0000314"/>
    <property type="project" value="UniProtKB"/>
</dbReference>
<dbReference type="GO" id="GO:0050872">
    <property type="term" value="P:white fat cell differentiation"/>
    <property type="evidence" value="ECO:0000314"/>
    <property type="project" value="UniProtKB"/>
</dbReference>
<dbReference type="CDD" id="cd00637">
    <property type="entry name" value="7tm_classA_rhodopsin-like"/>
    <property type="match status" value="1"/>
</dbReference>
<dbReference type="FunFam" id="1.20.1070.10:FF:000170">
    <property type="entry name" value="Free fatty acid receptor 4"/>
    <property type="match status" value="1"/>
</dbReference>
<dbReference type="Gene3D" id="1.20.1070.10">
    <property type="entry name" value="Rhodopsin 7-helix transmembrane proteins"/>
    <property type="match status" value="1"/>
</dbReference>
<dbReference type="InterPro" id="IPR000276">
    <property type="entry name" value="GPCR_Rhodpsn"/>
</dbReference>
<dbReference type="InterPro" id="IPR017452">
    <property type="entry name" value="GPCR_Rhodpsn_7TM"/>
</dbReference>
<dbReference type="PANTHER" id="PTHR45695:SF37">
    <property type="entry name" value="FREE FATTY ACID RECEPTOR 4-LIKE"/>
    <property type="match status" value="1"/>
</dbReference>
<dbReference type="PANTHER" id="PTHR45695">
    <property type="entry name" value="LEUCOKININ RECEPTOR-RELATED"/>
    <property type="match status" value="1"/>
</dbReference>
<dbReference type="Pfam" id="PF00001">
    <property type="entry name" value="7tm_1"/>
    <property type="match status" value="1"/>
</dbReference>
<dbReference type="PRINTS" id="PR00237">
    <property type="entry name" value="GPCRRHODOPSN"/>
</dbReference>
<dbReference type="SUPFAM" id="SSF81321">
    <property type="entry name" value="Family A G protein-coupled receptor-like"/>
    <property type="match status" value="1"/>
</dbReference>
<dbReference type="PROSITE" id="PS50262">
    <property type="entry name" value="G_PROTEIN_RECEP_F1_2"/>
    <property type="match status" value="1"/>
</dbReference>
<comment type="function">
    <text evidence="1 4 5 6 8 9 10 11 12 13 14 15 16 17 18 19 20">G-protein-coupled receptor for long-chain fatty acids (LCFAs) with a major role in adipogenesis, energy metabolism and inflammation. Signals via G-protein and beta-arrestin pathways (PubMed:26873857, PubMed:27852822). LCFAs sensing initiates activation of phosphoinositidase C-linked G proteins GNAQ and GNA11 (G(q)/G(11)), inducing a variety of cellular responses via second messenger pathways such as intracellular calcium mobilization, modulation of cyclic adenosine monophosphate (cAMP) production, and mitogen-activated protein kinases (MAPKs) (PubMed:26873857, PubMed:27852822). After LCFAs binding, associates with beta-arrestin ARRB2 that acts as an adapter protein coupling the receptor to specific downstream signaling pathways, as well as mediating receptor endocytosis (PubMed:26873857, PubMed:27852822). In response to dietary fats, plays an important role in the regulation of adipocyte proliferation and differentiation (PubMed:17250804, PubMed:22343897, PubMed:27853148, PubMed:29343498, PubMed:31761534). Acts as a receptor for omega-3 polyunsaturated fatty acids (PUFAs) at primary cilium of perivascular preadipocytes, initiating an adipogenic program via cAMP and CTCF-dependent chromatin remodeling that ultimately results in transcriptional activation of adipogenic genes and cell cycle entry (PubMed:31761534). Induces differentiation of brown and beige adipocytes probably via autocrine and endocrine functions of FGF21 hormone (PubMed:27853148, PubMed:29343498). Contributes to the thermogenic activation of brown adipose tissue and the browning of white adipose tissue (PubMed:27853148, PubMed:29343498). Activates brown adipocytes by initiating intracellular calcium signaling leading to mitochondrial depolarization and fission, and overall increased mitochondrial respiration (PubMed:29343498). Consequently stimulates fatty acid uptake and oxidation in mitochondria together with UCP1-mediated thermogenic respiration, eventually reducing fat mass (PubMed:29343498). Regulates bi-potential differentiation of bone marrow mesenchymal stem cells toward osteoblasts or adipocytes likely by up-regulating distinct integrins (PubMed:26365922). In response to dietary fats regulates hormone secretion and appetite (PubMed:15619630, PubMed:24222669, PubMed:24663807, PubMed:24742677, PubMed:25535828). Stimulates GIP and GLP1 secretion from enteroendocrine cells as well as GCG secretion in pancreatic alpha cells, thereby playing a role in the regulation of blood glucose levels (PubMed:15619630, PubMed:24742677, PubMed:25535828). Negatively regulates glucose-induced SST secretion in pancreatic delta cells (PubMed:24663807). Mediates LCFAs inhibition of GHRL secretion, an appetite-controlling hormone (PubMed:24222669). In taste buds, contributes to sensing of dietary fatty acids by the gustatory system (PubMed:20573884). During the inflammatory response, promotes anti-inflammatory M2 macrophage differentiation in adipose tissue (PubMed:20813258). Mediates the anti-inflammatory effects of omega-3 PUFAs via inhibition of NLRP3 inflammasome activation (By similarity). In this pathway, interacts with adapter protein ARRB2 and inhibits the priming step triggered by Toll-like receptors (TLRs) at the level of TAK1 and TAB1 (PubMed:20813258). Further inhibits the activation step when ARRB2 directly associates with NLRP3, leading to inhibition of pro-inflammatory cytokine release (By similarity). Mediates LCFAs anti-apoptotic effects (PubMed:15774482).</text>
</comment>
<comment type="subunit">
    <text evidence="16">Interacts (via C-terminus) with ARRB2 following LCFAs stimulation.</text>
</comment>
<comment type="interaction">
    <interactant intactId="EBI-2912413">
        <id>Q7TMA4</id>
    </interactant>
    <interactant intactId="EBI-994161">
        <id>Q91YI4</id>
        <label>Arrb2</label>
    </interactant>
    <organismsDiffer>false</organismsDiffer>
    <experiments>4</experiments>
</comment>
<comment type="subcellular location">
    <subcellularLocation>
        <location evidence="9 16 17">Cell membrane</location>
        <topology evidence="2">Multi-pass membrane protein</topology>
    </subcellularLocation>
    <subcellularLocation>
        <location evidence="1">Endosome membrane</location>
        <topology evidence="2">Multi-pass membrane protein</topology>
    </subcellularLocation>
    <subcellularLocation>
        <location evidence="1">Lysosome membrane</location>
        <topology evidence="2">Multi-pass membrane protein</topology>
    </subcellularLocation>
    <subcellularLocation>
        <location evidence="20">Cell projection</location>
        <location evidence="20">Cilium membrane</location>
        <topology evidence="2">Multi-pass membrane protein</topology>
    </subcellularLocation>
    <text evidence="1 20">Sorted to late endosome/lysosome compartments upon internalization (By similarity). Specifically localizes to the primary cilium of undifferentiated adipocytes. Ciliary trafficking is TULP3-dependent. As the cilium is lost during adipogenesis, moves to the plasma membrane (PubMed:31761534).</text>
</comment>
<comment type="tissue specificity">
    <text evidence="4 6 7 8 9 11 12 13 14 18 20">Highly expressed in brown and white adipose tissue (PubMed:17250804, PubMed:24222669, PubMed:27853148). Expressed in perivascular ciliated preadipocytes (at protein level) (PubMed:31761534). Expressed in the taste buds of the circumvallate and fungiform papillae, mainly in type II cells (at protein level) (PubMed:19071193, PubMed:20573884). Abundant expression is detected in the gastrointestinal tract (PubMed:15619630, PubMed:17250804, PubMed:24222669, PubMed:27853148). Highly expressed in lung and pituitary gland (PubMed:15619630, PubMed:17250804). Expressed in enteroendocrine K cells of the upper small intestine (PubMed:25535828). Expressed in alpha and delta cells of pancreatic islets (PubMed:24663807, PubMed:24742677). Expressed in pro-inflammatory CD11C-positive macrophages (PubMed:20813258). Also expressed in spleen (PubMed:17250804).</text>
</comment>
<comment type="developmental stage">
    <text evidence="6 15 19 20">Expression detected in differentiated mature adipocytes, with levels increasing during late stage adipocyte differentiation (PubMed:17250804, PubMed:29343498). Low expression is detected in preadipocytes, mainly localized in primary cilium (PubMed:31761534). Expression level in bone marrow mesenchymal stem cells is gradually increased during differentiation toward osteoblasts (PubMed:26365922).</text>
</comment>
<comment type="induction">
    <text evidence="6 9 18 19">Up-regulated in response to high-fat diet in adipose tissue macrophages and in hepatic Kupffer cells (PubMed:17250804, PubMed:20813258). Up-regulated in response to either short- or long-term cold exposure in brown adipose tissue and inguinal white adipose tissue (PubMed:27853148). Up-regulated by ADRB3 agonist (PubMed:29343498).</text>
</comment>
<comment type="PTM">
    <text evidence="16">Phosphorylated at two clusters of Ser and Thr residues located in the intracellular C-terminus, a prerequisite for FFAR4 internalization via an ARRB2-dependent pathway.</text>
</comment>
<comment type="disruption phenotype">
    <text evidence="8 9 10 13">Deficient mice show glucose intolerance, hyperinsulinemia and display insulin (INS) resistance and a reduced preference for fatty acids (PubMed:20573884, PubMed:22343897, PubMed:24742677). When fed a high-fat diet, they develop obesity and have fatty liver with decreased adipocyte differentiation and lipogenesis, and enhanced hepatic lipogenesis (PubMed:22343897). INS resistance in such mice is associated with reduced INS signaling and enhanced inflammation in adipose tissue (PubMed:20813258).</text>
</comment>
<comment type="similarity">
    <text evidence="3">Belongs to the G-protein coupled receptor 1 family.</text>
</comment>
<proteinExistence type="evidence at protein level"/>
<name>FFAR4_MOUSE</name>
<accession>Q7TMA4</accession>
<feature type="chain" id="PRO_0000069611" description="Free fatty acid receptor 4">
    <location>
        <begin position="1"/>
        <end position="361"/>
    </location>
</feature>
<feature type="topological domain" description="Extracellular" evidence="2">
    <location>
        <begin position="1"/>
        <end position="45"/>
    </location>
</feature>
<feature type="transmembrane region" description="Helical; Name=1" evidence="2">
    <location>
        <begin position="46"/>
        <end position="66"/>
    </location>
</feature>
<feature type="topological domain" description="Cytoplasmic" evidence="2">
    <location>
        <begin position="67"/>
        <end position="77"/>
    </location>
</feature>
<feature type="transmembrane region" description="Helical; Name=2" evidence="2">
    <location>
        <begin position="78"/>
        <end position="98"/>
    </location>
</feature>
<feature type="topological domain" description="Extracellular" evidence="2">
    <location>
        <begin position="99"/>
        <end position="103"/>
    </location>
</feature>
<feature type="transmembrane region" description="Helical; Name=3" evidence="2">
    <location>
        <begin position="104"/>
        <end position="124"/>
    </location>
</feature>
<feature type="topological domain" description="Cytoplasmic" evidence="2">
    <location>
        <begin position="125"/>
        <end position="156"/>
    </location>
</feature>
<feature type="transmembrane region" description="Helical; Name=4" evidence="2">
    <location>
        <begin position="157"/>
        <end position="177"/>
    </location>
</feature>
<feature type="topological domain" description="Extracellular" evidence="2">
    <location>
        <begin position="178"/>
        <end position="204"/>
    </location>
</feature>
<feature type="transmembrane region" description="Helical; Name=5" evidence="2">
    <location>
        <begin position="205"/>
        <end position="225"/>
    </location>
</feature>
<feature type="topological domain" description="Cytoplasmic" evidence="2">
    <location>
        <begin position="226"/>
        <end position="268"/>
    </location>
</feature>
<feature type="transmembrane region" description="Helical; Name=6" evidence="2">
    <location>
        <begin position="269"/>
        <end position="289"/>
    </location>
</feature>
<feature type="topological domain" description="Extracellular" evidence="2">
    <location>
        <begin position="290"/>
        <end position="295"/>
    </location>
</feature>
<feature type="transmembrane region" description="Helical; Name=7" evidence="2">
    <location>
        <begin position="296"/>
        <end position="316"/>
    </location>
</feature>
<feature type="topological domain" description="Cytoplasmic" evidence="2">
    <location>
        <begin position="317"/>
        <end position="361"/>
    </location>
</feature>
<feature type="modified residue" description="Phosphothreonine" evidence="16">
    <location>
        <position position="347"/>
    </location>
</feature>
<feature type="modified residue" description="Phosphothreonine" evidence="16">
    <location>
        <position position="349"/>
    </location>
</feature>
<feature type="modified residue" description="Phosphoserine" evidence="16">
    <location>
        <position position="350"/>
    </location>
</feature>
<feature type="modified residue" description="Phosphoserine" evidence="16">
    <location>
        <position position="357"/>
    </location>
</feature>
<feature type="modified residue" description="Phosphoserine" evidence="21">
    <location>
        <position position="360"/>
    </location>
</feature>
<feature type="modified residue" description="Phosphoserine" evidence="16">
    <location>
        <position position="361"/>
    </location>
</feature>
<feature type="glycosylation site" description="N-linked (GlcNAc...) asparagine" evidence="2">
    <location>
        <position position="21"/>
    </location>
</feature>
<feature type="disulfide bond" evidence="3">
    <location>
        <begin position="111"/>
        <end position="194"/>
    </location>
</feature>
<feature type="mutagenesis site" description="Impairs LCFA-mediated phosphorylation and interaction with ARRB2." evidence="16 17">
    <original>TDTSVRRNDLSVISS</original>
    <variation>ADAAVRRNDLAVIAA</variation>
    <location>
        <begin position="347"/>
        <end position="361"/>
    </location>
</feature>